<reference key="1">
    <citation type="journal article" date="2001" name="Mol. Biol. Evol.">
        <title>Mechanisms for evolving hypervariability: the case of conopeptides.</title>
        <authorList>
            <person name="Conticello S.G."/>
            <person name="Gilad Y."/>
            <person name="Avidan N."/>
            <person name="Ben-Asher E."/>
            <person name="Levy Z."/>
            <person name="Fainzilber M."/>
        </authorList>
    </citation>
    <scope>NUCLEOTIDE SEQUENCE [MRNA]</scope>
    <source>
        <tissue>Venom duct</tissue>
    </source>
</reference>
<reference key="2">
    <citation type="journal article" date="2006" name="Peptides">
        <title>Sequence diversity of O-superfamily conopeptides from Conus marmoreus native to Hainan.</title>
        <authorList>
            <person name="Luo S."/>
            <person name="Zhangsun D."/>
            <person name="Lin Q."/>
            <person name="Xie L."/>
            <person name="Wu Y."/>
            <person name="Zhu X."/>
        </authorList>
    </citation>
    <scope>NUCLEOTIDE SEQUENCE [MRNA]</scope>
    <source>
        <tissue>Venom duct</tissue>
    </source>
</reference>
<proteinExistence type="evidence at transcript level"/>
<comment type="function">
    <text evidence="1">Omega-conotoxins act at presynaptic membranes, they bind and block voltage-gated calcium channels.</text>
</comment>
<comment type="subcellular location">
    <subcellularLocation>
        <location evidence="1">Secreted</location>
    </subcellularLocation>
</comment>
<comment type="tissue specificity">
    <text>Expressed by the venom duct.</text>
</comment>
<comment type="domain">
    <text evidence="1">The presence of a 'disulfide through disulfide knot' structurally defines this protein as a knottin.</text>
</comment>
<comment type="domain">
    <text>The cysteine framework is VI/VII (C-C-CC-C-C).</text>
</comment>
<comment type="similarity">
    <text evidence="4">Belongs to the conotoxin O1 superfamily.</text>
</comment>
<protein>
    <recommendedName>
        <fullName>Omega-conotoxin-like TeAr94</fullName>
    </recommendedName>
    <alternativeName>
        <fullName>Omega-conotoxin TxMKLT1-02121</fullName>
    </alternativeName>
</protein>
<evidence type="ECO:0000250" key="1"/>
<evidence type="ECO:0000250" key="2">
    <source>
        <dbReference type="UniProtKB" id="Q26443"/>
    </source>
</evidence>
<evidence type="ECO:0000255" key="3"/>
<evidence type="ECO:0000305" key="4"/>
<sequence>MKLTCMMIVAVLFLTAWTFVTAVPHSSNALENLYLKAHHEMNNPEDSELNKRCYDSGTSCNTGNQCCSGWCIFVCL</sequence>
<keyword id="KW-0165">Cleavage on pair of basic residues</keyword>
<keyword id="KW-1015">Disulfide bond</keyword>
<keyword id="KW-0960">Knottin</keyword>
<keyword id="KW-0528">Neurotoxin</keyword>
<keyword id="KW-0638">Presynaptic neurotoxin</keyword>
<keyword id="KW-0964">Secreted</keyword>
<keyword id="KW-0732">Signal</keyword>
<keyword id="KW-0800">Toxin</keyword>
<feature type="signal peptide" evidence="3">
    <location>
        <begin position="1"/>
        <end position="22"/>
    </location>
</feature>
<feature type="propeptide" id="PRO_0000315476" evidence="4">
    <location>
        <begin position="23"/>
        <end position="50"/>
    </location>
</feature>
<feature type="peptide" id="PRO_0000315477" description="Omega-conotoxin-like TeAr94">
    <location>
        <begin position="53"/>
        <end position="76"/>
    </location>
</feature>
<feature type="disulfide bond" evidence="2">
    <location>
        <begin position="53"/>
        <end position="67"/>
    </location>
</feature>
<feature type="disulfide bond" evidence="2">
    <location>
        <begin position="60"/>
        <end position="71"/>
    </location>
</feature>
<feature type="disulfide bond" evidence="2">
    <location>
        <begin position="66"/>
        <end position="75"/>
    </location>
</feature>
<name>O194_CONTE</name>
<organism>
    <name type="scientific">Conus textile</name>
    <name type="common">Cloth-of-gold cone</name>
    <dbReference type="NCBI Taxonomy" id="6494"/>
    <lineage>
        <taxon>Eukaryota</taxon>
        <taxon>Metazoa</taxon>
        <taxon>Spiralia</taxon>
        <taxon>Lophotrochozoa</taxon>
        <taxon>Mollusca</taxon>
        <taxon>Gastropoda</taxon>
        <taxon>Caenogastropoda</taxon>
        <taxon>Neogastropoda</taxon>
        <taxon>Conoidea</taxon>
        <taxon>Conidae</taxon>
        <taxon>Conus</taxon>
        <taxon>Cylinder</taxon>
    </lineage>
</organism>
<accession>Q9U647</accession>
<dbReference type="EMBL" id="AF193269">
    <property type="protein sequence ID" value="AAF07980.1"/>
    <property type="molecule type" value="mRNA"/>
</dbReference>
<dbReference type="EMBL" id="DQ141166">
    <property type="protein sequence ID" value="AAZ83765.1"/>
    <property type="molecule type" value="mRNA"/>
</dbReference>
<dbReference type="ConoServer" id="1102">
    <property type="toxin name" value="TxO2 precursor"/>
</dbReference>
<dbReference type="GO" id="GO:0005576">
    <property type="term" value="C:extracellular region"/>
    <property type="evidence" value="ECO:0007669"/>
    <property type="project" value="UniProtKB-SubCell"/>
</dbReference>
<dbReference type="GO" id="GO:0044231">
    <property type="term" value="C:host cell presynaptic membrane"/>
    <property type="evidence" value="ECO:0007669"/>
    <property type="project" value="UniProtKB-KW"/>
</dbReference>
<dbReference type="GO" id="GO:0008200">
    <property type="term" value="F:ion channel inhibitor activity"/>
    <property type="evidence" value="ECO:0007669"/>
    <property type="project" value="InterPro"/>
</dbReference>
<dbReference type="GO" id="GO:0090729">
    <property type="term" value="F:toxin activity"/>
    <property type="evidence" value="ECO:0007669"/>
    <property type="project" value="UniProtKB-KW"/>
</dbReference>
<dbReference type="InterPro" id="IPR004214">
    <property type="entry name" value="Conotoxin"/>
</dbReference>
<dbReference type="InterPro" id="IPR012321">
    <property type="entry name" value="Conotoxin_omega-typ_CS"/>
</dbReference>
<dbReference type="Pfam" id="PF02950">
    <property type="entry name" value="Conotoxin"/>
    <property type="match status" value="1"/>
</dbReference>
<dbReference type="PROSITE" id="PS60004">
    <property type="entry name" value="OMEGA_CONOTOXIN"/>
    <property type="match status" value="1"/>
</dbReference>